<dbReference type="EC" id="6.5.1.4" evidence="1"/>
<dbReference type="EMBL" id="CP000300">
    <property type="protein sequence ID" value="ABE52656.1"/>
    <property type="molecule type" value="Genomic_DNA"/>
</dbReference>
<dbReference type="RefSeq" id="WP_011499799.1">
    <property type="nucleotide sequence ID" value="NC_007955.1"/>
</dbReference>
<dbReference type="SMR" id="Q12V70"/>
<dbReference type="STRING" id="259564.Mbur_1766"/>
<dbReference type="GeneID" id="3997326"/>
<dbReference type="KEGG" id="mbu:Mbur_1766"/>
<dbReference type="HOGENOM" id="CLU_027882_0_0_2"/>
<dbReference type="OrthoDB" id="7994at2157"/>
<dbReference type="Proteomes" id="UP000001979">
    <property type="component" value="Chromosome"/>
</dbReference>
<dbReference type="GO" id="GO:0005737">
    <property type="term" value="C:cytoplasm"/>
    <property type="evidence" value="ECO:0007669"/>
    <property type="project" value="UniProtKB-SubCell"/>
</dbReference>
<dbReference type="GO" id="GO:0005524">
    <property type="term" value="F:ATP binding"/>
    <property type="evidence" value="ECO:0007669"/>
    <property type="project" value="UniProtKB-KW"/>
</dbReference>
<dbReference type="GO" id="GO:0003963">
    <property type="term" value="F:RNA-3'-phosphate cyclase activity"/>
    <property type="evidence" value="ECO:0007669"/>
    <property type="project" value="UniProtKB-UniRule"/>
</dbReference>
<dbReference type="GO" id="GO:0006396">
    <property type="term" value="P:RNA processing"/>
    <property type="evidence" value="ECO:0007669"/>
    <property type="project" value="InterPro"/>
</dbReference>
<dbReference type="CDD" id="cd00874">
    <property type="entry name" value="RNA_Cyclase_Class_II"/>
    <property type="match status" value="1"/>
</dbReference>
<dbReference type="Gene3D" id="3.65.10.20">
    <property type="entry name" value="RNA 3'-terminal phosphate cyclase domain"/>
    <property type="match status" value="1"/>
</dbReference>
<dbReference type="Gene3D" id="3.30.360.20">
    <property type="entry name" value="RNA 3'-terminal phosphate cyclase, insert domain"/>
    <property type="match status" value="1"/>
</dbReference>
<dbReference type="HAMAP" id="MF_00200">
    <property type="entry name" value="RTC"/>
    <property type="match status" value="1"/>
</dbReference>
<dbReference type="InterPro" id="IPR013791">
    <property type="entry name" value="RNA3'-term_phos_cycl_insert"/>
</dbReference>
<dbReference type="InterPro" id="IPR023797">
    <property type="entry name" value="RNA3'_phos_cyclase_dom"/>
</dbReference>
<dbReference type="InterPro" id="IPR037136">
    <property type="entry name" value="RNA3'_phos_cyclase_dom_sf"/>
</dbReference>
<dbReference type="InterPro" id="IPR000228">
    <property type="entry name" value="RNA3'_term_phos_cyc"/>
</dbReference>
<dbReference type="InterPro" id="IPR017770">
    <property type="entry name" value="RNA3'_term_phos_cyc_type_1"/>
</dbReference>
<dbReference type="InterPro" id="IPR020719">
    <property type="entry name" value="RNA3'_term_phos_cycl-like_CS"/>
</dbReference>
<dbReference type="InterPro" id="IPR013792">
    <property type="entry name" value="RNA3'P_cycl/enolpyr_Trfase_a/b"/>
</dbReference>
<dbReference type="InterPro" id="IPR036553">
    <property type="entry name" value="RPTC_insert"/>
</dbReference>
<dbReference type="NCBIfam" id="TIGR03399">
    <property type="entry name" value="RNA_3prim_cycl"/>
    <property type="match status" value="1"/>
</dbReference>
<dbReference type="PANTHER" id="PTHR11096">
    <property type="entry name" value="RNA 3' TERMINAL PHOSPHATE CYCLASE"/>
    <property type="match status" value="1"/>
</dbReference>
<dbReference type="PANTHER" id="PTHR11096:SF0">
    <property type="entry name" value="RNA 3'-TERMINAL PHOSPHATE CYCLASE"/>
    <property type="match status" value="1"/>
</dbReference>
<dbReference type="Pfam" id="PF01137">
    <property type="entry name" value="RTC"/>
    <property type="match status" value="1"/>
</dbReference>
<dbReference type="Pfam" id="PF05189">
    <property type="entry name" value="RTC_insert"/>
    <property type="match status" value="1"/>
</dbReference>
<dbReference type="PIRSF" id="PIRSF005378">
    <property type="entry name" value="RNA3'_term_phos_cycl_euk"/>
    <property type="match status" value="1"/>
</dbReference>
<dbReference type="SUPFAM" id="SSF55205">
    <property type="entry name" value="EPT/RTPC-like"/>
    <property type="match status" value="2"/>
</dbReference>
<dbReference type="PROSITE" id="PS01287">
    <property type="entry name" value="RTC"/>
    <property type="match status" value="1"/>
</dbReference>
<organism>
    <name type="scientific">Methanococcoides burtonii (strain DSM 6242 / NBRC 107633 / OCM 468 / ACE-M)</name>
    <dbReference type="NCBI Taxonomy" id="259564"/>
    <lineage>
        <taxon>Archaea</taxon>
        <taxon>Methanobacteriati</taxon>
        <taxon>Methanobacteriota</taxon>
        <taxon>Stenosarchaea group</taxon>
        <taxon>Methanomicrobia</taxon>
        <taxon>Methanosarcinales</taxon>
        <taxon>Methanosarcinaceae</taxon>
        <taxon>Methanococcoides</taxon>
    </lineage>
</organism>
<feature type="chain" id="PRO_1000012112" description="RNA 3'-terminal phosphate cyclase">
    <location>
        <begin position="1"/>
        <end position="331"/>
    </location>
</feature>
<feature type="active site" description="Tele-AMP-histidine intermediate" evidence="1">
    <location>
        <position position="301"/>
    </location>
</feature>
<feature type="binding site" evidence="1">
    <location>
        <position position="100"/>
    </location>
    <ligand>
        <name>ATP</name>
        <dbReference type="ChEBI" id="CHEBI:30616"/>
    </ligand>
</feature>
<feature type="binding site" evidence="1">
    <location>
        <begin position="276"/>
        <end position="280"/>
    </location>
    <ligand>
        <name>ATP</name>
        <dbReference type="ChEBI" id="CHEBI:30616"/>
    </ligand>
</feature>
<comment type="function">
    <text evidence="1">Catalyzes the conversion of 3'-phosphate to a 2',3'-cyclic phosphodiester at the end of RNA. The mechanism of action of the enzyme occurs in 3 steps: (A) adenylation of the enzyme by ATP; (B) transfer of adenylate to an RNA-N3'P to produce RNA-N3'PP5'A; (C) and attack of the adjacent 2'-hydroxyl on the 3'-phosphorus in the diester linkage to produce the cyclic end product. The biological role of this enzyme is unknown but it is likely to function in some aspects of cellular RNA processing.</text>
</comment>
<comment type="catalytic activity">
    <reaction evidence="1">
        <text>a 3'-end 3'-phospho-ribonucleotide-RNA + ATP = a 3'-end 2',3'-cyclophospho-ribonucleotide-RNA + AMP + diphosphate</text>
        <dbReference type="Rhea" id="RHEA:23976"/>
        <dbReference type="Rhea" id="RHEA-COMP:10463"/>
        <dbReference type="Rhea" id="RHEA-COMP:10464"/>
        <dbReference type="ChEBI" id="CHEBI:30616"/>
        <dbReference type="ChEBI" id="CHEBI:33019"/>
        <dbReference type="ChEBI" id="CHEBI:83062"/>
        <dbReference type="ChEBI" id="CHEBI:83064"/>
        <dbReference type="ChEBI" id="CHEBI:456215"/>
        <dbReference type="EC" id="6.5.1.4"/>
    </reaction>
</comment>
<comment type="subcellular location">
    <subcellularLocation>
        <location evidence="1">Cytoplasm</location>
    </subcellularLocation>
</comment>
<comment type="similarity">
    <text evidence="1">Belongs to the RNA 3'-terminal cyclase family. Type 1 subfamily.</text>
</comment>
<proteinExistence type="inferred from homology"/>
<protein>
    <recommendedName>
        <fullName evidence="1">RNA 3'-terminal phosphate cyclase</fullName>
        <shortName evidence="1">RNA cyclase</shortName>
        <shortName evidence="1">RNA-3'-phosphate cyclase</shortName>
        <ecNumber evidence="1">6.5.1.4</ecNumber>
    </recommendedName>
</protein>
<reference key="1">
    <citation type="journal article" date="2009" name="ISME J.">
        <title>The genome sequence of the psychrophilic archaeon, Methanococcoides burtonii: the role of genome evolution in cold adaptation.</title>
        <authorList>
            <person name="Allen M.A."/>
            <person name="Lauro F.M."/>
            <person name="Williams T.J."/>
            <person name="Burg D."/>
            <person name="Siddiqui K.S."/>
            <person name="De Francisci D."/>
            <person name="Chong K.W."/>
            <person name="Pilak O."/>
            <person name="Chew H.H."/>
            <person name="De Maere M.Z."/>
            <person name="Ting L."/>
            <person name="Katrib M."/>
            <person name="Ng C."/>
            <person name="Sowers K.R."/>
            <person name="Galperin M.Y."/>
            <person name="Anderson I.J."/>
            <person name="Ivanova N."/>
            <person name="Dalin E."/>
            <person name="Martinez M."/>
            <person name="Lapidus A."/>
            <person name="Hauser L."/>
            <person name="Land M."/>
            <person name="Thomas T."/>
            <person name="Cavicchioli R."/>
        </authorList>
    </citation>
    <scope>NUCLEOTIDE SEQUENCE [LARGE SCALE GENOMIC DNA]</scope>
    <source>
        <strain>DSM 6242 / NBRC 107633 / OCM 468 / ACE-M</strain>
    </source>
</reference>
<sequence length="331" mass="35548">MIDIDGSYGEGGGQIVRNAIALSAVTGKATSIKNIRKDRPNPGLSAQHVKAIGIAALLCDAKVEGIKIGSTNIAFFPQEIRGGKYTIDIGTAGSIALLLQCIMPIATYSNTNIKLEIKGGTDVSWAPSIDYLKNVTLSALSKMGYRCNIDILKRGYYPRGGGIVNAIIEPSHLVPDRFSEERGTIRGISHCSNLPEHVAQRQADKAKAILENAGHECSIETCRTDFTSTGSGITLYCGMKGSFVPGKRGTTAEKVGNDAATSLLDELLTPSSVDIHLADQLIPYLGLAEGGSFTVKEISPHTKTNIWVTEKFLDVKFKIEKRNDIVKISIQ</sequence>
<name>RTCA_METBU</name>
<evidence type="ECO:0000255" key="1">
    <source>
        <dbReference type="HAMAP-Rule" id="MF_00200"/>
    </source>
</evidence>
<gene>
    <name evidence="1" type="primary">rtcA</name>
    <name type="ordered locus">Mbur_1766</name>
</gene>
<accession>Q12V70</accession>
<keyword id="KW-0067">ATP-binding</keyword>
<keyword id="KW-0963">Cytoplasm</keyword>
<keyword id="KW-0436">Ligase</keyword>
<keyword id="KW-0547">Nucleotide-binding</keyword>